<evidence type="ECO:0000255" key="1">
    <source>
        <dbReference type="HAMAP-Rule" id="MF_01615"/>
    </source>
</evidence>
<comment type="function">
    <text evidence="1">Catalyzes the hydrolysis of glutamine to glutamate and ammonia as part of the biosynthesis of pyridoxal 5'-phosphate. The resulting ammonia molecule is channeled to the active site of PdxS.</text>
</comment>
<comment type="catalytic activity">
    <reaction evidence="1">
        <text>aldehydo-D-ribose 5-phosphate + D-glyceraldehyde 3-phosphate + L-glutamine = pyridoxal 5'-phosphate + L-glutamate + phosphate + 3 H2O + H(+)</text>
        <dbReference type="Rhea" id="RHEA:31507"/>
        <dbReference type="ChEBI" id="CHEBI:15377"/>
        <dbReference type="ChEBI" id="CHEBI:15378"/>
        <dbReference type="ChEBI" id="CHEBI:29985"/>
        <dbReference type="ChEBI" id="CHEBI:43474"/>
        <dbReference type="ChEBI" id="CHEBI:58273"/>
        <dbReference type="ChEBI" id="CHEBI:58359"/>
        <dbReference type="ChEBI" id="CHEBI:59776"/>
        <dbReference type="ChEBI" id="CHEBI:597326"/>
        <dbReference type="EC" id="4.3.3.6"/>
    </reaction>
</comment>
<comment type="catalytic activity">
    <reaction evidence="1">
        <text>L-glutamine + H2O = L-glutamate + NH4(+)</text>
        <dbReference type="Rhea" id="RHEA:15889"/>
        <dbReference type="ChEBI" id="CHEBI:15377"/>
        <dbReference type="ChEBI" id="CHEBI:28938"/>
        <dbReference type="ChEBI" id="CHEBI:29985"/>
        <dbReference type="ChEBI" id="CHEBI:58359"/>
        <dbReference type="EC" id="3.5.1.2"/>
    </reaction>
</comment>
<comment type="pathway">
    <text evidence="1">Cofactor biosynthesis; pyridoxal 5'-phosphate biosynthesis.</text>
</comment>
<comment type="subunit">
    <text evidence="1">In the presence of PdxS, forms a dodecamer of heterodimers. Only shows activity in the heterodimer.</text>
</comment>
<comment type="similarity">
    <text evidence="1">Belongs to the glutaminase PdxT/SNO family.</text>
</comment>
<gene>
    <name evidence="1" type="primary">pdxT</name>
    <name type="ordered locus">BQ2027_MB2636C</name>
</gene>
<accession>Q7TY92</accession>
<accession>A0A1R3Y1P1</accession>
<accession>X2BLD1</accession>
<organism>
    <name type="scientific">Mycobacterium bovis (strain ATCC BAA-935 / AF2122/97)</name>
    <dbReference type="NCBI Taxonomy" id="233413"/>
    <lineage>
        <taxon>Bacteria</taxon>
        <taxon>Bacillati</taxon>
        <taxon>Actinomycetota</taxon>
        <taxon>Actinomycetes</taxon>
        <taxon>Mycobacteriales</taxon>
        <taxon>Mycobacteriaceae</taxon>
        <taxon>Mycobacterium</taxon>
        <taxon>Mycobacterium tuberculosis complex</taxon>
    </lineage>
</organism>
<dbReference type="EC" id="4.3.3.6" evidence="1"/>
<dbReference type="EC" id="3.5.1.2" evidence="1"/>
<dbReference type="EMBL" id="LT708304">
    <property type="protein sequence ID" value="SIU01254.1"/>
    <property type="molecule type" value="Genomic_DNA"/>
</dbReference>
<dbReference type="RefSeq" id="NP_856282.1">
    <property type="nucleotide sequence ID" value="NC_002945.3"/>
</dbReference>
<dbReference type="RefSeq" id="WP_003413465.1">
    <property type="nucleotide sequence ID" value="NC_002945.4"/>
</dbReference>
<dbReference type="SMR" id="Q7TY92"/>
<dbReference type="KEGG" id="mbo:BQ2027_MB2636C"/>
<dbReference type="PATRIC" id="fig|233413.5.peg.2897"/>
<dbReference type="UniPathway" id="UPA00245"/>
<dbReference type="Proteomes" id="UP000001419">
    <property type="component" value="Chromosome"/>
</dbReference>
<dbReference type="GO" id="GO:0005829">
    <property type="term" value="C:cytosol"/>
    <property type="evidence" value="ECO:0007669"/>
    <property type="project" value="TreeGrafter"/>
</dbReference>
<dbReference type="GO" id="GO:1903600">
    <property type="term" value="C:glutaminase complex"/>
    <property type="evidence" value="ECO:0007669"/>
    <property type="project" value="TreeGrafter"/>
</dbReference>
<dbReference type="GO" id="GO:0004359">
    <property type="term" value="F:glutaminase activity"/>
    <property type="evidence" value="ECO:0007669"/>
    <property type="project" value="UniProtKB-UniRule"/>
</dbReference>
<dbReference type="GO" id="GO:0036381">
    <property type="term" value="F:pyridoxal 5'-phosphate synthase (glutamine hydrolysing) activity"/>
    <property type="evidence" value="ECO:0007669"/>
    <property type="project" value="UniProtKB-UniRule"/>
</dbReference>
<dbReference type="GO" id="GO:0006543">
    <property type="term" value="P:glutamine catabolic process"/>
    <property type="evidence" value="ECO:0007669"/>
    <property type="project" value="UniProtKB-UniRule"/>
</dbReference>
<dbReference type="GO" id="GO:0042823">
    <property type="term" value="P:pyridoxal phosphate biosynthetic process"/>
    <property type="evidence" value="ECO:0007669"/>
    <property type="project" value="UniProtKB-UniRule"/>
</dbReference>
<dbReference type="GO" id="GO:0008614">
    <property type="term" value="P:pyridoxine metabolic process"/>
    <property type="evidence" value="ECO:0007669"/>
    <property type="project" value="TreeGrafter"/>
</dbReference>
<dbReference type="CDD" id="cd01749">
    <property type="entry name" value="GATase1_PB"/>
    <property type="match status" value="1"/>
</dbReference>
<dbReference type="FunFam" id="3.40.50.880:FF:000010">
    <property type="entry name" value="uncharacterized protein LOC100176842 isoform X2"/>
    <property type="match status" value="1"/>
</dbReference>
<dbReference type="Gene3D" id="3.40.50.880">
    <property type="match status" value="1"/>
</dbReference>
<dbReference type="HAMAP" id="MF_01615">
    <property type="entry name" value="PdxT"/>
    <property type="match status" value="1"/>
</dbReference>
<dbReference type="InterPro" id="IPR029062">
    <property type="entry name" value="Class_I_gatase-like"/>
</dbReference>
<dbReference type="InterPro" id="IPR002161">
    <property type="entry name" value="PdxT/SNO"/>
</dbReference>
<dbReference type="InterPro" id="IPR021196">
    <property type="entry name" value="PdxT/SNO_CS"/>
</dbReference>
<dbReference type="NCBIfam" id="TIGR03800">
    <property type="entry name" value="PLP_synth_Pdx2"/>
    <property type="match status" value="1"/>
</dbReference>
<dbReference type="PANTHER" id="PTHR31559">
    <property type="entry name" value="PYRIDOXAL 5'-PHOSPHATE SYNTHASE SUBUNIT SNO"/>
    <property type="match status" value="1"/>
</dbReference>
<dbReference type="PANTHER" id="PTHR31559:SF0">
    <property type="entry name" value="PYRIDOXAL 5'-PHOSPHATE SYNTHASE SUBUNIT SNO1-RELATED"/>
    <property type="match status" value="1"/>
</dbReference>
<dbReference type="Pfam" id="PF01174">
    <property type="entry name" value="SNO"/>
    <property type="match status" value="1"/>
</dbReference>
<dbReference type="PIRSF" id="PIRSF005639">
    <property type="entry name" value="Glut_amidoT_SNO"/>
    <property type="match status" value="1"/>
</dbReference>
<dbReference type="SUPFAM" id="SSF52317">
    <property type="entry name" value="Class I glutamine amidotransferase-like"/>
    <property type="match status" value="1"/>
</dbReference>
<dbReference type="PROSITE" id="PS01236">
    <property type="entry name" value="PDXT_SNO_1"/>
    <property type="match status" value="1"/>
</dbReference>
<dbReference type="PROSITE" id="PS51130">
    <property type="entry name" value="PDXT_SNO_2"/>
    <property type="match status" value="1"/>
</dbReference>
<keyword id="KW-0315">Glutamine amidotransferase</keyword>
<keyword id="KW-0378">Hydrolase</keyword>
<keyword id="KW-0456">Lyase</keyword>
<keyword id="KW-0663">Pyridoxal phosphate</keyword>
<keyword id="KW-1185">Reference proteome</keyword>
<feature type="chain" id="PRO_0000135646" description="Pyridoxal 5'-phosphate synthase subunit PdxT">
    <location>
        <begin position="1"/>
        <end position="198"/>
    </location>
</feature>
<feature type="active site" description="Nucleophile" evidence="1">
    <location>
        <position position="81"/>
    </location>
</feature>
<feature type="active site" description="Charge relay system" evidence="1">
    <location>
        <position position="177"/>
    </location>
</feature>
<feature type="active site" description="Charge relay system" evidence="1">
    <location>
        <position position="179"/>
    </location>
</feature>
<feature type="binding site" evidence="1">
    <location>
        <begin position="49"/>
        <end position="51"/>
    </location>
    <ligand>
        <name>L-glutamine</name>
        <dbReference type="ChEBI" id="CHEBI:58359"/>
    </ligand>
</feature>
<feature type="binding site" evidence="1">
    <location>
        <position position="113"/>
    </location>
    <ligand>
        <name>L-glutamine</name>
        <dbReference type="ChEBI" id="CHEBI:58359"/>
    </ligand>
</feature>
<feature type="binding site" evidence="1">
    <location>
        <begin position="141"/>
        <end position="142"/>
    </location>
    <ligand>
        <name>L-glutamine</name>
        <dbReference type="ChEBI" id="CHEBI:58359"/>
    </ligand>
</feature>
<proteinExistence type="inferred from homology"/>
<name>PDXT_MYCBO</name>
<sequence>MSVPRVGVLALQGDTREHLAALRECGAEPMTVRRRDELDAVDALVIPGGESTTMSHLLLDLDLLGPLRARLADGLPAYGSCAGMILLASEILDAGAAGRQALPLRAMNMTVRRNAFGSQVDSFEGDIEFAGLDDPVRAVFIRAPWVERVGDGVQVLARAAGHIVAVRQGAVLATAFHPEMTGDRRIHQLFVDIVTSAA</sequence>
<reference key="1">
    <citation type="journal article" date="2003" name="Proc. Natl. Acad. Sci. U.S.A.">
        <title>The complete genome sequence of Mycobacterium bovis.</title>
        <authorList>
            <person name="Garnier T."/>
            <person name="Eiglmeier K."/>
            <person name="Camus J.-C."/>
            <person name="Medina N."/>
            <person name="Mansoor H."/>
            <person name="Pryor M."/>
            <person name="Duthoy S."/>
            <person name="Grondin S."/>
            <person name="Lacroix C."/>
            <person name="Monsempe C."/>
            <person name="Simon S."/>
            <person name="Harris B."/>
            <person name="Atkin R."/>
            <person name="Doggett J."/>
            <person name="Mayes R."/>
            <person name="Keating L."/>
            <person name="Wheeler P.R."/>
            <person name="Parkhill J."/>
            <person name="Barrell B.G."/>
            <person name="Cole S.T."/>
            <person name="Gordon S.V."/>
            <person name="Hewinson R.G."/>
        </authorList>
    </citation>
    <scope>NUCLEOTIDE SEQUENCE [LARGE SCALE GENOMIC DNA]</scope>
    <source>
        <strain>ATCC BAA-935 / AF2122/97</strain>
    </source>
</reference>
<reference key="2">
    <citation type="journal article" date="2017" name="Genome Announc.">
        <title>Updated reference genome sequence and annotation of Mycobacterium bovis AF2122/97.</title>
        <authorList>
            <person name="Malone K.M."/>
            <person name="Farrell D."/>
            <person name="Stuber T.P."/>
            <person name="Schubert O.T."/>
            <person name="Aebersold R."/>
            <person name="Robbe-Austerman S."/>
            <person name="Gordon S.V."/>
        </authorList>
    </citation>
    <scope>NUCLEOTIDE SEQUENCE [LARGE SCALE GENOMIC DNA]</scope>
    <scope>GENOME REANNOTATION</scope>
    <source>
        <strain>ATCC BAA-935 / AF2122/97</strain>
    </source>
</reference>
<protein>
    <recommendedName>
        <fullName evidence="1">Pyridoxal 5'-phosphate synthase subunit PdxT</fullName>
        <ecNumber evidence="1">4.3.3.6</ecNumber>
    </recommendedName>
    <alternativeName>
        <fullName evidence="1">Pdx2</fullName>
    </alternativeName>
    <alternativeName>
        <fullName evidence="1">Pyridoxal 5'-phosphate synthase glutaminase subunit</fullName>
        <ecNumber evidence="1">3.5.1.2</ecNumber>
    </alternativeName>
</protein>